<protein>
    <recommendedName>
        <fullName>Pre-B lymphocyte protein 3</fullName>
    </recommendedName>
    <alternativeName>
        <fullName>N27C7-2</fullName>
    </alternativeName>
    <alternativeName>
        <fullName>Protein VPreB3</fullName>
    </alternativeName>
</protein>
<reference key="1">
    <citation type="journal article" date="1999" name="Cytogenet. Cell Genet.">
        <title>VPREB3: cDNA characterization and expression in human and chromosome mapping in human and mouse.</title>
        <authorList>
            <person name="Rosnet O."/>
            <person name="Mattei M.-G."/>
            <person name="Delattre O."/>
            <person name="Schiff C."/>
        </authorList>
    </citation>
    <scope>NUCLEOTIDE SEQUENCE [MRNA]</scope>
</reference>
<reference key="2">
    <citation type="submission" date="2000-11" db="EMBL/GenBank/DDBJ databases">
        <title>Molecular cloning of N27C7-2 gene.</title>
        <authorList>
            <person name="Shimizu N."/>
            <person name="Minosima S."/>
            <person name="Kawasaki K."/>
            <person name="Sasaki T."/>
            <person name="Hosono K."/>
        </authorList>
    </citation>
    <scope>NUCLEOTIDE SEQUENCE [GENOMIC DNA]</scope>
</reference>
<reference key="3">
    <citation type="journal article" date="2003" name="Genome Res.">
        <title>The secreted protein discovery initiative (SPDI), a large-scale effort to identify novel human secreted and transmembrane proteins: a bioinformatics assessment.</title>
        <authorList>
            <person name="Clark H.F."/>
            <person name="Gurney A.L."/>
            <person name="Abaya E."/>
            <person name="Baker K."/>
            <person name="Baldwin D.T."/>
            <person name="Brush J."/>
            <person name="Chen J."/>
            <person name="Chow B."/>
            <person name="Chui C."/>
            <person name="Crowley C."/>
            <person name="Currell B."/>
            <person name="Deuel B."/>
            <person name="Dowd P."/>
            <person name="Eaton D."/>
            <person name="Foster J.S."/>
            <person name="Grimaldi C."/>
            <person name="Gu Q."/>
            <person name="Hass P.E."/>
            <person name="Heldens S."/>
            <person name="Huang A."/>
            <person name="Kim H.S."/>
            <person name="Klimowski L."/>
            <person name="Jin Y."/>
            <person name="Johnson S."/>
            <person name="Lee J."/>
            <person name="Lewis L."/>
            <person name="Liao D."/>
            <person name="Mark M.R."/>
            <person name="Robbie E."/>
            <person name="Sanchez C."/>
            <person name="Schoenfeld J."/>
            <person name="Seshagiri S."/>
            <person name="Simmons L."/>
            <person name="Singh J."/>
            <person name="Smith V."/>
            <person name="Stinson J."/>
            <person name="Vagts A."/>
            <person name="Vandlen R.L."/>
            <person name="Watanabe C."/>
            <person name="Wieand D."/>
            <person name="Woods K."/>
            <person name="Xie M.-H."/>
            <person name="Yansura D.G."/>
            <person name="Yi S."/>
            <person name="Yu G."/>
            <person name="Yuan J."/>
            <person name="Zhang M."/>
            <person name="Zhang Z."/>
            <person name="Goddard A.D."/>
            <person name="Wood W.I."/>
            <person name="Godowski P.J."/>
            <person name="Gray A.M."/>
        </authorList>
    </citation>
    <scope>NUCLEOTIDE SEQUENCE [LARGE SCALE MRNA]</scope>
</reference>
<reference key="4">
    <citation type="journal article" date="2004" name="Genome Biol.">
        <title>A genome annotation-driven approach to cloning the human ORFeome.</title>
        <authorList>
            <person name="Collins J.E."/>
            <person name="Wright C.L."/>
            <person name="Edwards C.A."/>
            <person name="Davis M.P."/>
            <person name="Grinham J.A."/>
            <person name="Cole C.G."/>
            <person name="Goward M.E."/>
            <person name="Aguado B."/>
            <person name="Mallya M."/>
            <person name="Mokrab Y."/>
            <person name="Huckle E.J."/>
            <person name="Beare D.M."/>
            <person name="Dunham I."/>
        </authorList>
    </citation>
    <scope>NUCLEOTIDE SEQUENCE [LARGE SCALE MRNA]</scope>
</reference>
<reference key="5">
    <citation type="journal article" date="2004" name="Nat. Genet.">
        <title>Complete sequencing and characterization of 21,243 full-length human cDNAs.</title>
        <authorList>
            <person name="Ota T."/>
            <person name="Suzuki Y."/>
            <person name="Nishikawa T."/>
            <person name="Otsuki T."/>
            <person name="Sugiyama T."/>
            <person name="Irie R."/>
            <person name="Wakamatsu A."/>
            <person name="Hayashi K."/>
            <person name="Sato H."/>
            <person name="Nagai K."/>
            <person name="Kimura K."/>
            <person name="Makita H."/>
            <person name="Sekine M."/>
            <person name="Obayashi M."/>
            <person name="Nishi T."/>
            <person name="Shibahara T."/>
            <person name="Tanaka T."/>
            <person name="Ishii S."/>
            <person name="Yamamoto J."/>
            <person name="Saito K."/>
            <person name="Kawai Y."/>
            <person name="Isono Y."/>
            <person name="Nakamura Y."/>
            <person name="Nagahari K."/>
            <person name="Murakami K."/>
            <person name="Yasuda T."/>
            <person name="Iwayanagi T."/>
            <person name="Wagatsuma M."/>
            <person name="Shiratori A."/>
            <person name="Sudo H."/>
            <person name="Hosoiri T."/>
            <person name="Kaku Y."/>
            <person name="Kodaira H."/>
            <person name="Kondo H."/>
            <person name="Sugawara M."/>
            <person name="Takahashi M."/>
            <person name="Kanda K."/>
            <person name="Yokoi T."/>
            <person name="Furuya T."/>
            <person name="Kikkawa E."/>
            <person name="Omura Y."/>
            <person name="Abe K."/>
            <person name="Kamihara K."/>
            <person name="Katsuta N."/>
            <person name="Sato K."/>
            <person name="Tanikawa M."/>
            <person name="Yamazaki M."/>
            <person name="Ninomiya K."/>
            <person name="Ishibashi T."/>
            <person name="Yamashita H."/>
            <person name="Murakawa K."/>
            <person name="Fujimori K."/>
            <person name="Tanai H."/>
            <person name="Kimata M."/>
            <person name="Watanabe M."/>
            <person name="Hiraoka S."/>
            <person name="Chiba Y."/>
            <person name="Ishida S."/>
            <person name="Ono Y."/>
            <person name="Takiguchi S."/>
            <person name="Watanabe S."/>
            <person name="Yosida M."/>
            <person name="Hotuta T."/>
            <person name="Kusano J."/>
            <person name="Kanehori K."/>
            <person name="Takahashi-Fujii A."/>
            <person name="Hara H."/>
            <person name="Tanase T.-O."/>
            <person name="Nomura Y."/>
            <person name="Togiya S."/>
            <person name="Komai F."/>
            <person name="Hara R."/>
            <person name="Takeuchi K."/>
            <person name="Arita M."/>
            <person name="Imose N."/>
            <person name="Musashino K."/>
            <person name="Yuuki H."/>
            <person name="Oshima A."/>
            <person name="Sasaki N."/>
            <person name="Aotsuka S."/>
            <person name="Yoshikawa Y."/>
            <person name="Matsunawa H."/>
            <person name="Ichihara T."/>
            <person name="Shiohata N."/>
            <person name="Sano S."/>
            <person name="Moriya S."/>
            <person name="Momiyama H."/>
            <person name="Satoh N."/>
            <person name="Takami S."/>
            <person name="Terashima Y."/>
            <person name="Suzuki O."/>
            <person name="Nakagawa S."/>
            <person name="Senoh A."/>
            <person name="Mizoguchi H."/>
            <person name="Goto Y."/>
            <person name="Shimizu F."/>
            <person name="Wakebe H."/>
            <person name="Hishigaki H."/>
            <person name="Watanabe T."/>
            <person name="Sugiyama A."/>
            <person name="Takemoto M."/>
            <person name="Kawakami B."/>
            <person name="Yamazaki M."/>
            <person name="Watanabe K."/>
            <person name="Kumagai A."/>
            <person name="Itakura S."/>
            <person name="Fukuzumi Y."/>
            <person name="Fujimori Y."/>
            <person name="Komiyama M."/>
            <person name="Tashiro H."/>
            <person name="Tanigami A."/>
            <person name="Fujiwara T."/>
            <person name="Ono T."/>
            <person name="Yamada K."/>
            <person name="Fujii Y."/>
            <person name="Ozaki K."/>
            <person name="Hirao M."/>
            <person name="Ohmori Y."/>
            <person name="Kawabata A."/>
            <person name="Hikiji T."/>
            <person name="Kobatake N."/>
            <person name="Inagaki H."/>
            <person name="Ikema Y."/>
            <person name="Okamoto S."/>
            <person name="Okitani R."/>
            <person name="Kawakami T."/>
            <person name="Noguchi S."/>
            <person name="Itoh T."/>
            <person name="Shigeta K."/>
            <person name="Senba T."/>
            <person name="Matsumura K."/>
            <person name="Nakajima Y."/>
            <person name="Mizuno T."/>
            <person name="Morinaga M."/>
            <person name="Sasaki M."/>
            <person name="Togashi T."/>
            <person name="Oyama M."/>
            <person name="Hata H."/>
            <person name="Watanabe M."/>
            <person name="Komatsu T."/>
            <person name="Mizushima-Sugano J."/>
            <person name="Satoh T."/>
            <person name="Shirai Y."/>
            <person name="Takahashi Y."/>
            <person name="Nakagawa K."/>
            <person name="Okumura K."/>
            <person name="Nagase T."/>
            <person name="Nomura N."/>
            <person name="Kikuchi H."/>
            <person name="Masuho Y."/>
            <person name="Yamashita R."/>
            <person name="Nakai K."/>
            <person name="Yada T."/>
            <person name="Nakamura Y."/>
            <person name="Ohara O."/>
            <person name="Isogai T."/>
            <person name="Sugano S."/>
        </authorList>
    </citation>
    <scope>NUCLEOTIDE SEQUENCE [LARGE SCALE MRNA]</scope>
    <source>
        <tissue>Spleen</tissue>
    </source>
</reference>
<reference key="6">
    <citation type="submission" date="2005-07" db="EMBL/GenBank/DDBJ databases">
        <authorList>
            <person name="Mural R.J."/>
            <person name="Istrail S."/>
            <person name="Sutton G.G."/>
            <person name="Florea L."/>
            <person name="Halpern A.L."/>
            <person name="Mobarry C.M."/>
            <person name="Lippert R."/>
            <person name="Walenz B."/>
            <person name="Shatkay H."/>
            <person name="Dew I."/>
            <person name="Miller J.R."/>
            <person name="Flanigan M.J."/>
            <person name="Edwards N.J."/>
            <person name="Bolanos R."/>
            <person name="Fasulo D."/>
            <person name="Halldorsson B.V."/>
            <person name="Hannenhalli S."/>
            <person name="Turner R."/>
            <person name="Yooseph S."/>
            <person name="Lu F."/>
            <person name="Nusskern D.R."/>
            <person name="Shue B.C."/>
            <person name="Zheng X.H."/>
            <person name="Zhong F."/>
            <person name="Delcher A.L."/>
            <person name="Huson D.H."/>
            <person name="Kravitz S.A."/>
            <person name="Mouchard L."/>
            <person name="Reinert K."/>
            <person name="Remington K.A."/>
            <person name="Clark A.G."/>
            <person name="Waterman M.S."/>
            <person name="Eichler E.E."/>
            <person name="Adams M.D."/>
            <person name="Hunkapiller M.W."/>
            <person name="Myers E.W."/>
            <person name="Venter J.C."/>
        </authorList>
    </citation>
    <scope>NUCLEOTIDE SEQUENCE [LARGE SCALE GENOMIC DNA]</scope>
</reference>
<reference key="7">
    <citation type="journal article" date="2004" name="Genome Res.">
        <title>The status, quality, and expansion of the NIH full-length cDNA project: the Mammalian Gene Collection (MGC).</title>
        <authorList>
            <consortium name="The MGC Project Team"/>
        </authorList>
    </citation>
    <scope>NUCLEOTIDE SEQUENCE [LARGE SCALE MRNA]</scope>
    <source>
        <tissue>Testis</tissue>
    </source>
</reference>
<dbReference type="EMBL" id="AF163825">
    <property type="protein sequence ID" value="AAF09451.1"/>
    <property type="molecule type" value="mRNA"/>
</dbReference>
<dbReference type="EMBL" id="AB050772">
    <property type="protein sequence ID" value="BAB83034.1"/>
    <property type="molecule type" value="Genomic_DNA"/>
</dbReference>
<dbReference type="EMBL" id="AY359000">
    <property type="protein sequence ID" value="AAQ89359.1"/>
    <property type="molecule type" value="mRNA"/>
</dbReference>
<dbReference type="EMBL" id="CR456610">
    <property type="protein sequence ID" value="CAG30496.1"/>
    <property type="molecule type" value="mRNA"/>
</dbReference>
<dbReference type="EMBL" id="AK312098">
    <property type="protein sequence ID" value="BAG35034.1"/>
    <property type="molecule type" value="mRNA"/>
</dbReference>
<dbReference type="EMBL" id="CH471095">
    <property type="protein sequence ID" value="EAW59598.1"/>
    <property type="molecule type" value="Genomic_DNA"/>
</dbReference>
<dbReference type="EMBL" id="BC020666">
    <property type="protein sequence ID" value="AAH20666.1"/>
    <property type="molecule type" value="mRNA"/>
</dbReference>
<dbReference type="CCDS" id="CCDS13813.1"/>
<dbReference type="RefSeq" id="NP_037510.1">
    <property type="nucleotide sequence ID" value="NM_013378.3"/>
</dbReference>
<dbReference type="SMR" id="Q9UKI3"/>
<dbReference type="FunCoup" id="Q9UKI3">
    <property type="interactions" value="296"/>
</dbReference>
<dbReference type="STRING" id="9606.ENSP00000248948"/>
<dbReference type="BioMuta" id="VPREB3"/>
<dbReference type="DMDM" id="11387357"/>
<dbReference type="MassIVE" id="Q9UKI3"/>
<dbReference type="PaxDb" id="9606-ENSP00000248948"/>
<dbReference type="PeptideAtlas" id="Q9UKI3"/>
<dbReference type="ProteomicsDB" id="84790"/>
<dbReference type="Antibodypedia" id="298">
    <property type="antibodies" value="108 antibodies from 25 providers"/>
</dbReference>
<dbReference type="DNASU" id="29802"/>
<dbReference type="Ensembl" id="ENST00000248948.4">
    <property type="protein sequence ID" value="ENSP00000248948.3"/>
    <property type="gene ID" value="ENSG00000128218.8"/>
</dbReference>
<dbReference type="GeneID" id="29802"/>
<dbReference type="KEGG" id="hsa:29802"/>
<dbReference type="MANE-Select" id="ENST00000248948.4">
    <property type="protein sequence ID" value="ENSP00000248948.3"/>
    <property type="RefSeq nucleotide sequence ID" value="NM_013378.3"/>
    <property type="RefSeq protein sequence ID" value="NP_037510.1"/>
</dbReference>
<dbReference type="UCSC" id="uc002zxt.4">
    <property type="organism name" value="human"/>
</dbReference>
<dbReference type="AGR" id="HGNC:12710"/>
<dbReference type="CTD" id="29802"/>
<dbReference type="DisGeNET" id="29802"/>
<dbReference type="GeneCards" id="VPREB3"/>
<dbReference type="HGNC" id="HGNC:12710">
    <property type="gene designation" value="VPREB3"/>
</dbReference>
<dbReference type="HPA" id="ENSG00000128218">
    <property type="expression patterns" value="Tissue enhanced (epididymis, intestine, lymphoid tissue)"/>
</dbReference>
<dbReference type="MIM" id="605017">
    <property type="type" value="gene"/>
</dbReference>
<dbReference type="neXtProt" id="NX_Q9UKI3"/>
<dbReference type="OpenTargets" id="ENSG00000128218"/>
<dbReference type="PharmGKB" id="PA37325"/>
<dbReference type="VEuPathDB" id="HostDB:ENSG00000128218"/>
<dbReference type="eggNOG" id="ENOG502SQUV">
    <property type="taxonomic scope" value="Eukaryota"/>
</dbReference>
<dbReference type="GeneTree" id="ENSGT00940000161808"/>
<dbReference type="InParanoid" id="Q9UKI3"/>
<dbReference type="OMA" id="DVAHNAC"/>
<dbReference type="OrthoDB" id="6103117at2759"/>
<dbReference type="PAN-GO" id="Q9UKI3">
    <property type="GO annotations" value="3 GO annotations based on evolutionary models"/>
</dbReference>
<dbReference type="PhylomeDB" id="Q9UKI3"/>
<dbReference type="TreeFam" id="TF352061"/>
<dbReference type="PathwayCommons" id="Q9UKI3"/>
<dbReference type="Reactome" id="R-HSA-202733">
    <property type="pathway name" value="Cell surface interactions at the vascular wall"/>
</dbReference>
<dbReference type="BioGRID-ORCS" id="29802">
    <property type="hits" value="6 hits in 1142 CRISPR screens"/>
</dbReference>
<dbReference type="ChiTaRS" id="VPREB3">
    <property type="organism name" value="human"/>
</dbReference>
<dbReference type="GeneWiki" id="VPREB3"/>
<dbReference type="GenomeRNAi" id="29802"/>
<dbReference type="Pharos" id="Q9UKI3">
    <property type="development level" value="Tbio"/>
</dbReference>
<dbReference type="PRO" id="PR:Q9UKI3"/>
<dbReference type="Proteomes" id="UP000005640">
    <property type="component" value="Chromosome 22"/>
</dbReference>
<dbReference type="RNAct" id="Q9UKI3">
    <property type="molecule type" value="protein"/>
</dbReference>
<dbReference type="Bgee" id="ENSG00000128218">
    <property type="expression patterns" value="Expressed in lymph node and 110 other cell types or tissues"/>
</dbReference>
<dbReference type="ExpressionAtlas" id="Q9UKI3">
    <property type="expression patterns" value="baseline and differential"/>
</dbReference>
<dbReference type="GO" id="GO:0005783">
    <property type="term" value="C:endoplasmic reticulum"/>
    <property type="evidence" value="ECO:0000303"/>
    <property type="project" value="ProtInc"/>
</dbReference>
<dbReference type="GO" id="GO:0005576">
    <property type="term" value="C:extracellular region"/>
    <property type="evidence" value="ECO:0000304"/>
    <property type="project" value="Reactome"/>
</dbReference>
<dbReference type="GO" id="GO:0019814">
    <property type="term" value="C:immunoglobulin complex"/>
    <property type="evidence" value="ECO:0000318"/>
    <property type="project" value="GO_Central"/>
</dbReference>
<dbReference type="GO" id="GO:0006955">
    <property type="term" value="P:immune response"/>
    <property type="evidence" value="ECO:0000318"/>
    <property type="project" value="GO_Central"/>
</dbReference>
<dbReference type="FunFam" id="2.60.40.10:FF:001336">
    <property type="entry name" value="V-set pre-B cell surrogate light chain 3"/>
    <property type="match status" value="1"/>
</dbReference>
<dbReference type="Gene3D" id="2.60.40.10">
    <property type="entry name" value="Immunoglobulins"/>
    <property type="match status" value="1"/>
</dbReference>
<dbReference type="InterPro" id="IPR007110">
    <property type="entry name" value="Ig-like_dom"/>
</dbReference>
<dbReference type="InterPro" id="IPR036179">
    <property type="entry name" value="Ig-like_dom_sf"/>
</dbReference>
<dbReference type="InterPro" id="IPR013783">
    <property type="entry name" value="Ig-like_fold"/>
</dbReference>
<dbReference type="InterPro" id="IPR003599">
    <property type="entry name" value="Ig_sub"/>
</dbReference>
<dbReference type="InterPro" id="IPR013106">
    <property type="entry name" value="Ig_V-set"/>
</dbReference>
<dbReference type="InterPro" id="IPR050150">
    <property type="entry name" value="IgV_Light_Chain"/>
</dbReference>
<dbReference type="PANTHER" id="PTHR23267">
    <property type="entry name" value="IMMUNOGLOBULIN LIGHT CHAIN"/>
    <property type="match status" value="1"/>
</dbReference>
<dbReference type="Pfam" id="PF07686">
    <property type="entry name" value="V-set"/>
    <property type="match status" value="1"/>
</dbReference>
<dbReference type="SMART" id="SM00409">
    <property type="entry name" value="IG"/>
    <property type="match status" value="1"/>
</dbReference>
<dbReference type="SMART" id="SM00406">
    <property type="entry name" value="IGv"/>
    <property type="match status" value="1"/>
</dbReference>
<dbReference type="SUPFAM" id="SSF48726">
    <property type="entry name" value="Immunoglobulin"/>
    <property type="match status" value="1"/>
</dbReference>
<dbReference type="PROSITE" id="PS50835">
    <property type="entry name" value="IG_LIKE"/>
    <property type="match status" value="1"/>
</dbReference>
<keyword id="KW-1015">Disulfide bond</keyword>
<keyword id="KW-0393">Immunoglobulin domain</keyword>
<keyword id="KW-1267">Proteomics identification</keyword>
<keyword id="KW-1185">Reference proteome</keyword>
<keyword id="KW-0732">Signal</keyword>
<accession>Q9UKI3</accession>
<accession>B2R587</accession>
<organism>
    <name type="scientific">Homo sapiens</name>
    <name type="common">Human</name>
    <dbReference type="NCBI Taxonomy" id="9606"/>
    <lineage>
        <taxon>Eukaryota</taxon>
        <taxon>Metazoa</taxon>
        <taxon>Chordata</taxon>
        <taxon>Craniata</taxon>
        <taxon>Vertebrata</taxon>
        <taxon>Euteleostomi</taxon>
        <taxon>Mammalia</taxon>
        <taxon>Eutheria</taxon>
        <taxon>Euarchontoglires</taxon>
        <taxon>Primates</taxon>
        <taxon>Haplorrhini</taxon>
        <taxon>Catarrhini</taxon>
        <taxon>Hominidae</taxon>
        <taxon>Homo</taxon>
    </lineage>
</organism>
<name>VPRE3_HUMAN</name>
<feature type="signal peptide" evidence="1">
    <location>
        <begin position="1"/>
        <end position="20"/>
    </location>
</feature>
<feature type="chain" id="PRO_0000015003" description="Pre-B lymphocyte protein 3">
    <location>
        <begin position="21"/>
        <end position="123"/>
    </location>
</feature>
<feature type="domain" description="Ig-like">
    <location>
        <begin position="21"/>
        <end position="123"/>
    </location>
</feature>
<feature type="disulfide bond" evidence="2">
    <location>
        <begin position="40"/>
        <end position="115"/>
    </location>
</feature>
<feature type="sequence variant" id="VAR_049954" description="In dbSNP:rs34372784.">
    <original>R</original>
    <variation>W</variation>
    <location>
        <position position="4"/>
    </location>
</feature>
<sequence length="123" mass="13710">MACRCLSFLLMGTFLSVSQTVLAQLDALLVFPGQVAQLSCTLSPQHVTIRDYGVSWYQQRAGSAPRYLLYYRSEEDHHRPADIPDRFSAAKDEAHNACVLTISPVQPEDDADYYCSVGYGFSP</sequence>
<proteinExistence type="evidence at protein level"/>
<gene>
    <name type="primary">VPREB3</name>
    <name type="ORF">UNQ355/PRO619</name>
</gene>
<comment type="function">
    <text>Associates with the Ig-mu chain to form a molecular complex that is expressed on the surface of pre-B-cells.</text>
</comment>
<comment type="tissue specificity">
    <text>Expressed in B-cell precursors. Expressed in fetal liver, bone marrow, spleen and lymph node.</text>
</comment>
<comment type="similarity">
    <text evidence="3">Belongs to the immunoglobulin superfamily.</text>
</comment>
<evidence type="ECO:0000255" key="1"/>
<evidence type="ECO:0000255" key="2">
    <source>
        <dbReference type="PROSITE-ProRule" id="PRU00114"/>
    </source>
</evidence>
<evidence type="ECO:0000305" key="3"/>